<sequence>MKFVDEAEIQVIAGNGGDGCVSFRREKFIPLGGPDGGDGGDGGSVWLVADENLNTLVDFRHERIFKAQRGVNGMGQQMYGKAGQDKIISVPIGTVVINVQTDEVIGDMVRHGDRLLVAKGGTGGLGNMHFKSSINRAPRQARPGELGEERTLKLELKLLADIGMLGFPNVGKSTFIRAVSAATPKVADYPFTTLYPNLGVVKIEAYSSFVIADVPGLIEGAADGVGLGTQFLRHLQRTKLLLHMVDISATADAYGNEKVGVGLLPIEQVRKLEIELERHDPALLDKPRWLVLNKADLMPQEDAQDLAEALIAELHWTAPWYLVSAVSREGTWPIMKSAMTLFEHQREVAAEQSVSSR</sequence>
<accession>B0U3R3</accession>
<feature type="chain" id="PRO_0000386402" description="GTPase Obg">
    <location>
        <begin position="1"/>
        <end position="357"/>
    </location>
</feature>
<feature type="domain" description="Obg" evidence="2">
    <location>
        <begin position="1"/>
        <end position="159"/>
    </location>
</feature>
<feature type="domain" description="OBG-type G" evidence="1">
    <location>
        <begin position="160"/>
        <end position="343"/>
    </location>
</feature>
<feature type="binding site" evidence="1">
    <location>
        <begin position="166"/>
        <end position="173"/>
    </location>
    <ligand>
        <name>GTP</name>
        <dbReference type="ChEBI" id="CHEBI:37565"/>
    </ligand>
</feature>
<feature type="binding site" evidence="1">
    <location>
        <position position="173"/>
    </location>
    <ligand>
        <name>Mg(2+)</name>
        <dbReference type="ChEBI" id="CHEBI:18420"/>
    </ligand>
</feature>
<feature type="binding site" evidence="1">
    <location>
        <begin position="191"/>
        <end position="195"/>
    </location>
    <ligand>
        <name>GTP</name>
        <dbReference type="ChEBI" id="CHEBI:37565"/>
    </ligand>
</feature>
<feature type="binding site" evidence="1">
    <location>
        <position position="193"/>
    </location>
    <ligand>
        <name>Mg(2+)</name>
        <dbReference type="ChEBI" id="CHEBI:18420"/>
    </ligand>
</feature>
<feature type="binding site" evidence="1">
    <location>
        <begin position="213"/>
        <end position="216"/>
    </location>
    <ligand>
        <name>GTP</name>
        <dbReference type="ChEBI" id="CHEBI:37565"/>
    </ligand>
</feature>
<feature type="binding site" evidence="1">
    <location>
        <begin position="293"/>
        <end position="296"/>
    </location>
    <ligand>
        <name>GTP</name>
        <dbReference type="ChEBI" id="CHEBI:37565"/>
    </ligand>
</feature>
<feature type="binding site" evidence="1">
    <location>
        <begin position="324"/>
        <end position="326"/>
    </location>
    <ligand>
        <name>GTP</name>
        <dbReference type="ChEBI" id="CHEBI:37565"/>
    </ligand>
</feature>
<reference key="1">
    <citation type="journal article" date="2010" name="J. Bacteriol.">
        <title>Whole genome sequences of two Xylella fastidiosa strains (M12 and M23) causing almond leaf scorch disease in California.</title>
        <authorList>
            <person name="Chen J."/>
            <person name="Xie G."/>
            <person name="Han S."/>
            <person name="Chertkov O."/>
            <person name="Sims D."/>
            <person name="Civerolo E.L."/>
        </authorList>
    </citation>
    <scope>NUCLEOTIDE SEQUENCE [LARGE SCALE GENOMIC DNA]</scope>
    <source>
        <strain>M12</strain>
    </source>
</reference>
<gene>
    <name evidence="1" type="primary">obg</name>
    <name type="ordered locus">Xfasm12_1582</name>
</gene>
<dbReference type="EC" id="3.6.5.-" evidence="1"/>
<dbReference type="EMBL" id="CP000941">
    <property type="protein sequence ID" value="ACA12492.1"/>
    <property type="molecule type" value="Genomic_DNA"/>
</dbReference>
<dbReference type="SMR" id="B0U3R3"/>
<dbReference type="KEGG" id="xfm:Xfasm12_1582"/>
<dbReference type="HOGENOM" id="CLU_011747_2_0_6"/>
<dbReference type="GO" id="GO:0005737">
    <property type="term" value="C:cytoplasm"/>
    <property type="evidence" value="ECO:0007669"/>
    <property type="project" value="UniProtKB-SubCell"/>
</dbReference>
<dbReference type="GO" id="GO:0005525">
    <property type="term" value="F:GTP binding"/>
    <property type="evidence" value="ECO:0007669"/>
    <property type="project" value="UniProtKB-UniRule"/>
</dbReference>
<dbReference type="GO" id="GO:0003924">
    <property type="term" value="F:GTPase activity"/>
    <property type="evidence" value="ECO:0007669"/>
    <property type="project" value="UniProtKB-UniRule"/>
</dbReference>
<dbReference type="GO" id="GO:0000287">
    <property type="term" value="F:magnesium ion binding"/>
    <property type="evidence" value="ECO:0007669"/>
    <property type="project" value="InterPro"/>
</dbReference>
<dbReference type="GO" id="GO:0042254">
    <property type="term" value="P:ribosome biogenesis"/>
    <property type="evidence" value="ECO:0007669"/>
    <property type="project" value="UniProtKB-UniRule"/>
</dbReference>
<dbReference type="CDD" id="cd01898">
    <property type="entry name" value="Obg"/>
    <property type="match status" value="1"/>
</dbReference>
<dbReference type="FunFam" id="2.70.210.12:FF:000001">
    <property type="entry name" value="GTPase Obg"/>
    <property type="match status" value="1"/>
</dbReference>
<dbReference type="Gene3D" id="2.70.210.12">
    <property type="entry name" value="GTP1/OBG domain"/>
    <property type="match status" value="1"/>
</dbReference>
<dbReference type="Gene3D" id="3.40.50.300">
    <property type="entry name" value="P-loop containing nucleotide triphosphate hydrolases"/>
    <property type="match status" value="1"/>
</dbReference>
<dbReference type="HAMAP" id="MF_01454">
    <property type="entry name" value="GTPase_Obg"/>
    <property type="match status" value="1"/>
</dbReference>
<dbReference type="InterPro" id="IPR031167">
    <property type="entry name" value="G_OBG"/>
</dbReference>
<dbReference type="InterPro" id="IPR006073">
    <property type="entry name" value="GTP-bd"/>
</dbReference>
<dbReference type="InterPro" id="IPR014100">
    <property type="entry name" value="GTP-bd_Obg/CgtA"/>
</dbReference>
<dbReference type="InterPro" id="IPR006074">
    <property type="entry name" value="GTP1-OBG_CS"/>
</dbReference>
<dbReference type="InterPro" id="IPR006169">
    <property type="entry name" value="GTP1_OBG_dom"/>
</dbReference>
<dbReference type="InterPro" id="IPR036726">
    <property type="entry name" value="GTP1_OBG_dom_sf"/>
</dbReference>
<dbReference type="InterPro" id="IPR045086">
    <property type="entry name" value="OBG_GTPase"/>
</dbReference>
<dbReference type="InterPro" id="IPR027417">
    <property type="entry name" value="P-loop_NTPase"/>
</dbReference>
<dbReference type="NCBIfam" id="TIGR02729">
    <property type="entry name" value="Obg_CgtA"/>
    <property type="match status" value="1"/>
</dbReference>
<dbReference type="NCBIfam" id="NF008955">
    <property type="entry name" value="PRK12297.1"/>
    <property type="match status" value="1"/>
</dbReference>
<dbReference type="NCBIfam" id="NF008956">
    <property type="entry name" value="PRK12299.1"/>
    <property type="match status" value="1"/>
</dbReference>
<dbReference type="PANTHER" id="PTHR11702">
    <property type="entry name" value="DEVELOPMENTALLY REGULATED GTP-BINDING PROTEIN-RELATED"/>
    <property type="match status" value="1"/>
</dbReference>
<dbReference type="PANTHER" id="PTHR11702:SF31">
    <property type="entry name" value="MITOCHONDRIAL RIBOSOME-ASSOCIATED GTPASE 2"/>
    <property type="match status" value="1"/>
</dbReference>
<dbReference type="Pfam" id="PF01018">
    <property type="entry name" value="GTP1_OBG"/>
    <property type="match status" value="1"/>
</dbReference>
<dbReference type="Pfam" id="PF01926">
    <property type="entry name" value="MMR_HSR1"/>
    <property type="match status" value="1"/>
</dbReference>
<dbReference type="PIRSF" id="PIRSF002401">
    <property type="entry name" value="GTP_bd_Obg/CgtA"/>
    <property type="match status" value="1"/>
</dbReference>
<dbReference type="PRINTS" id="PR00326">
    <property type="entry name" value="GTP1OBG"/>
</dbReference>
<dbReference type="SUPFAM" id="SSF82051">
    <property type="entry name" value="Obg GTP-binding protein N-terminal domain"/>
    <property type="match status" value="1"/>
</dbReference>
<dbReference type="SUPFAM" id="SSF52540">
    <property type="entry name" value="P-loop containing nucleoside triphosphate hydrolases"/>
    <property type="match status" value="1"/>
</dbReference>
<dbReference type="PROSITE" id="PS51710">
    <property type="entry name" value="G_OBG"/>
    <property type="match status" value="1"/>
</dbReference>
<dbReference type="PROSITE" id="PS00905">
    <property type="entry name" value="GTP1_OBG"/>
    <property type="match status" value="1"/>
</dbReference>
<dbReference type="PROSITE" id="PS51883">
    <property type="entry name" value="OBG"/>
    <property type="match status" value="1"/>
</dbReference>
<keyword id="KW-0963">Cytoplasm</keyword>
<keyword id="KW-0342">GTP-binding</keyword>
<keyword id="KW-0378">Hydrolase</keyword>
<keyword id="KW-0460">Magnesium</keyword>
<keyword id="KW-0479">Metal-binding</keyword>
<keyword id="KW-0547">Nucleotide-binding</keyword>
<proteinExistence type="inferred from homology"/>
<comment type="function">
    <text evidence="1">An essential GTPase which binds GTP, GDP and possibly (p)ppGpp with moderate affinity, with high nucleotide exchange rates and a fairly low GTP hydrolysis rate. Plays a role in control of the cell cycle, stress response, ribosome biogenesis and in those bacteria that undergo differentiation, in morphogenesis control.</text>
</comment>
<comment type="cofactor">
    <cofactor evidence="1">
        <name>Mg(2+)</name>
        <dbReference type="ChEBI" id="CHEBI:18420"/>
    </cofactor>
</comment>
<comment type="subunit">
    <text evidence="1">Monomer.</text>
</comment>
<comment type="subcellular location">
    <subcellularLocation>
        <location evidence="1">Cytoplasm</location>
    </subcellularLocation>
</comment>
<comment type="similarity">
    <text evidence="1">Belongs to the TRAFAC class OBG-HflX-like GTPase superfamily. OBG GTPase family.</text>
</comment>
<name>OBG_XYLFM</name>
<evidence type="ECO:0000255" key="1">
    <source>
        <dbReference type="HAMAP-Rule" id="MF_01454"/>
    </source>
</evidence>
<evidence type="ECO:0000255" key="2">
    <source>
        <dbReference type="PROSITE-ProRule" id="PRU01231"/>
    </source>
</evidence>
<organism>
    <name type="scientific">Xylella fastidiosa (strain M12)</name>
    <dbReference type="NCBI Taxonomy" id="405440"/>
    <lineage>
        <taxon>Bacteria</taxon>
        <taxon>Pseudomonadati</taxon>
        <taxon>Pseudomonadota</taxon>
        <taxon>Gammaproteobacteria</taxon>
        <taxon>Lysobacterales</taxon>
        <taxon>Lysobacteraceae</taxon>
        <taxon>Xylella</taxon>
    </lineage>
</organism>
<protein>
    <recommendedName>
        <fullName evidence="1">GTPase Obg</fullName>
        <ecNumber evidence="1">3.6.5.-</ecNumber>
    </recommendedName>
    <alternativeName>
        <fullName evidence="1">GTP-binding protein Obg</fullName>
    </alternativeName>
</protein>